<gene>
    <name evidence="1" type="primary">rbfA</name>
    <name type="ordered locus">Rxyl_1413</name>
</gene>
<comment type="function">
    <text evidence="1">One of several proteins that assist in the late maturation steps of the functional core of the 30S ribosomal subunit. Associates with free 30S ribosomal subunits (but not with 30S subunits that are part of 70S ribosomes or polysomes). Required for efficient processing of 16S rRNA. May interact with the 5'-terminal helix region of 16S rRNA.</text>
</comment>
<comment type="subunit">
    <text evidence="1">Monomer. Binds 30S ribosomal subunits, but not 50S ribosomal subunits or 70S ribosomes.</text>
</comment>
<comment type="subcellular location">
    <subcellularLocation>
        <location evidence="1">Cytoplasm</location>
    </subcellularLocation>
</comment>
<comment type="similarity">
    <text evidence="1">Belongs to the RbfA family.</text>
</comment>
<evidence type="ECO:0000255" key="1">
    <source>
        <dbReference type="HAMAP-Rule" id="MF_00003"/>
    </source>
</evidence>
<evidence type="ECO:0000256" key="2">
    <source>
        <dbReference type="SAM" id="MobiDB-lite"/>
    </source>
</evidence>
<feature type="chain" id="PRO_1000000195" description="Ribosome-binding factor A">
    <location>
        <begin position="1"/>
        <end position="122"/>
    </location>
</feature>
<feature type="region of interest" description="Disordered" evidence="2">
    <location>
        <begin position="95"/>
        <end position="122"/>
    </location>
</feature>
<feature type="compositionally biased region" description="Basic and acidic residues" evidence="2">
    <location>
        <begin position="95"/>
        <end position="111"/>
    </location>
</feature>
<reference key="1">
    <citation type="submission" date="2006-06" db="EMBL/GenBank/DDBJ databases">
        <title>Complete sequence of Rubrobacter xylanophilus DSM 9941.</title>
        <authorList>
            <consortium name="US DOE Joint Genome Institute"/>
            <person name="Copeland A."/>
            <person name="Lucas S."/>
            <person name="Lapidus A."/>
            <person name="Barry K."/>
            <person name="Detter J.C."/>
            <person name="Glavina del Rio T."/>
            <person name="Hammon N."/>
            <person name="Israni S."/>
            <person name="Dalin E."/>
            <person name="Tice H."/>
            <person name="Pitluck S."/>
            <person name="Munk A.C."/>
            <person name="Brettin T."/>
            <person name="Bruce D."/>
            <person name="Han C."/>
            <person name="Tapia R."/>
            <person name="Gilna P."/>
            <person name="Schmutz J."/>
            <person name="Larimer F."/>
            <person name="Land M."/>
            <person name="Hauser L."/>
            <person name="Kyrpides N."/>
            <person name="Lykidis A."/>
            <person name="da Costa M.S."/>
            <person name="Rainey F.A."/>
            <person name="Empadinhas N."/>
            <person name="Jolivet E."/>
            <person name="Battista J.R."/>
            <person name="Richardson P."/>
        </authorList>
    </citation>
    <scope>NUCLEOTIDE SEQUENCE [LARGE SCALE GENOMIC DNA]</scope>
    <source>
        <strain>DSM 9941 / JCM 11954 / NBRC 16129 / PRD-1</strain>
    </source>
</reference>
<protein>
    <recommendedName>
        <fullName evidence="1">Ribosome-binding factor A</fullName>
    </recommendedName>
</protein>
<proteinExistence type="inferred from homology"/>
<sequence>MSDARTRKIEARLKEIVGDEVASLSDPRLKGLVTVTGVRVSPNLSHATVFYSLLAGGDPEEAREGLQSAAGRIQAAVGAQTRLKRTPRLRFEPDPTVERVTRIQRTLREVSGEDGDGNGTQE</sequence>
<name>RBFA_RUBXD</name>
<organism>
    <name type="scientific">Rubrobacter xylanophilus (strain DSM 9941 / JCM 11954 / NBRC 16129 / PRD-1)</name>
    <dbReference type="NCBI Taxonomy" id="266117"/>
    <lineage>
        <taxon>Bacteria</taxon>
        <taxon>Bacillati</taxon>
        <taxon>Actinomycetota</taxon>
        <taxon>Rubrobacteria</taxon>
        <taxon>Rubrobacterales</taxon>
        <taxon>Rubrobacteraceae</taxon>
        <taxon>Rubrobacter</taxon>
    </lineage>
</organism>
<keyword id="KW-0963">Cytoplasm</keyword>
<keyword id="KW-1185">Reference proteome</keyword>
<keyword id="KW-0690">Ribosome biogenesis</keyword>
<dbReference type="EMBL" id="CP000386">
    <property type="protein sequence ID" value="ABG04375.1"/>
    <property type="molecule type" value="Genomic_DNA"/>
</dbReference>
<dbReference type="RefSeq" id="WP_011564392.1">
    <property type="nucleotide sequence ID" value="NC_008148.1"/>
</dbReference>
<dbReference type="SMR" id="Q1AW53"/>
<dbReference type="STRING" id="266117.Rxyl_1413"/>
<dbReference type="KEGG" id="rxy:Rxyl_1413"/>
<dbReference type="eggNOG" id="COG0858">
    <property type="taxonomic scope" value="Bacteria"/>
</dbReference>
<dbReference type="HOGENOM" id="CLU_089475_3_2_11"/>
<dbReference type="PhylomeDB" id="Q1AW53"/>
<dbReference type="Proteomes" id="UP000006637">
    <property type="component" value="Chromosome"/>
</dbReference>
<dbReference type="GO" id="GO:0005829">
    <property type="term" value="C:cytosol"/>
    <property type="evidence" value="ECO:0007669"/>
    <property type="project" value="TreeGrafter"/>
</dbReference>
<dbReference type="GO" id="GO:0043024">
    <property type="term" value="F:ribosomal small subunit binding"/>
    <property type="evidence" value="ECO:0007669"/>
    <property type="project" value="TreeGrafter"/>
</dbReference>
<dbReference type="GO" id="GO:0030490">
    <property type="term" value="P:maturation of SSU-rRNA"/>
    <property type="evidence" value="ECO:0007669"/>
    <property type="project" value="UniProtKB-UniRule"/>
</dbReference>
<dbReference type="Gene3D" id="3.30.300.20">
    <property type="match status" value="1"/>
</dbReference>
<dbReference type="HAMAP" id="MF_00003">
    <property type="entry name" value="RbfA"/>
    <property type="match status" value="1"/>
</dbReference>
<dbReference type="InterPro" id="IPR015946">
    <property type="entry name" value="KH_dom-like_a/b"/>
</dbReference>
<dbReference type="InterPro" id="IPR000238">
    <property type="entry name" value="RbfA"/>
</dbReference>
<dbReference type="InterPro" id="IPR023799">
    <property type="entry name" value="RbfA_dom_sf"/>
</dbReference>
<dbReference type="InterPro" id="IPR020053">
    <property type="entry name" value="Ribosome-bd_factorA_CS"/>
</dbReference>
<dbReference type="NCBIfam" id="TIGR00082">
    <property type="entry name" value="rbfA"/>
    <property type="match status" value="1"/>
</dbReference>
<dbReference type="PANTHER" id="PTHR33515">
    <property type="entry name" value="RIBOSOME-BINDING FACTOR A, CHLOROPLASTIC-RELATED"/>
    <property type="match status" value="1"/>
</dbReference>
<dbReference type="PANTHER" id="PTHR33515:SF1">
    <property type="entry name" value="RIBOSOME-BINDING FACTOR A, CHLOROPLASTIC-RELATED"/>
    <property type="match status" value="1"/>
</dbReference>
<dbReference type="Pfam" id="PF02033">
    <property type="entry name" value="RBFA"/>
    <property type="match status" value="1"/>
</dbReference>
<dbReference type="SUPFAM" id="SSF89919">
    <property type="entry name" value="Ribosome-binding factor A, RbfA"/>
    <property type="match status" value="1"/>
</dbReference>
<dbReference type="PROSITE" id="PS01319">
    <property type="entry name" value="RBFA"/>
    <property type="match status" value="1"/>
</dbReference>
<accession>Q1AW53</accession>